<accession>Q7MW36</accession>
<name>RUVA_PORGI</name>
<keyword id="KW-0963">Cytoplasm</keyword>
<keyword id="KW-0227">DNA damage</keyword>
<keyword id="KW-0233">DNA recombination</keyword>
<keyword id="KW-0234">DNA repair</keyword>
<keyword id="KW-0238">DNA-binding</keyword>
<keyword id="KW-1185">Reference proteome</keyword>
<organism>
    <name type="scientific">Porphyromonas gingivalis (strain ATCC BAA-308 / W83)</name>
    <dbReference type="NCBI Taxonomy" id="242619"/>
    <lineage>
        <taxon>Bacteria</taxon>
        <taxon>Pseudomonadati</taxon>
        <taxon>Bacteroidota</taxon>
        <taxon>Bacteroidia</taxon>
        <taxon>Bacteroidales</taxon>
        <taxon>Porphyromonadaceae</taxon>
        <taxon>Porphyromonas</taxon>
    </lineage>
</organism>
<feature type="chain" id="PRO_0000094661" description="Holliday junction branch migration complex subunit RuvA">
    <location>
        <begin position="1"/>
        <end position="202"/>
    </location>
</feature>
<feature type="region of interest" description="Domain I" evidence="1">
    <location>
        <begin position="1"/>
        <end position="63"/>
    </location>
</feature>
<feature type="region of interest" description="Domain II" evidence="1">
    <location>
        <begin position="64"/>
        <end position="142"/>
    </location>
</feature>
<feature type="region of interest" description="Flexible linker" evidence="1">
    <location>
        <begin position="143"/>
        <end position="153"/>
    </location>
</feature>
<feature type="region of interest" description="Domain III" evidence="1">
    <location>
        <begin position="153"/>
        <end position="202"/>
    </location>
</feature>
<dbReference type="EMBL" id="AE015924">
    <property type="protein sequence ID" value="AAQ65970.1"/>
    <property type="molecule type" value="Genomic_DNA"/>
</dbReference>
<dbReference type="RefSeq" id="WP_004585347.1">
    <property type="nucleotide sequence ID" value="NC_002950.2"/>
</dbReference>
<dbReference type="SMR" id="Q7MW36"/>
<dbReference type="STRING" id="242619.PG_0811"/>
<dbReference type="EnsemblBacteria" id="AAQ65970">
    <property type="protein sequence ID" value="AAQ65970"/>
    <property type="gene ID" value="PG_0811"/>
</dbReference>
<dbReference type="KEGG" id="pgi:PG_0811"/>
<dbReference type="eggNOG" id="COG0632">
    <property type="taxonomic scope" value="Bacteria"/>
</dbReference>
<dbReference type="HOGENOM" id="CLU_087936_3_0_10"/>
<dbReference type="Proteomes" id="UP000000588">
    <property type="component" value="Chromosome"/>
</dbReference>
<dbReference type="GO" id="GO:0005737">
    <property type="term" value="C:cytoplasm"/>
    <property type="evidence" value="ECO:0007669"/>
    <property type="project" value="UniProtKB-SubCell"/>
</dbReference>
<dbReference type="GO" id="GO:0009379">
    <property type="term" value="C:Holliday junction helicase complex"/>
    <property type="evidence" value="ECO:0007669"/>
    <property type="project" value="InterPro"/>
</dbReference>
<dbReference type="GO" id="GO:0048476">
    <property type="term" value="C:Holliday junction resolvase complex"/>
    <property type="evidence" value="ECO:0007669"/>
    <property type="project" value="UniProtKB-UniRule"/>
</dbReference>
<dbReference type="GO" id="GO:0005524">
    <property type="term" value="F:ATP binding"/>
    <property type="evidence" value="ECO:0007669"/>
    <property type="project" value="InterPro"/>
</dbReference>
<dbReference type="GO" id="GO:0000400">
    <property type="term" value="F:four-way junction DNA binding"/>
    <property type="evidence" value="ECO:0007669"/>
    <property type="project" value="UniProtKB-UniRule"/>
</dbReference>
<dbReference type="GO" id="GO:0009378">
    <property type="term" value="F:four-way junction helicase activity"/>
    <property type="evidence" value="ECO:0007669"/>
    <property type="project" value="InterPro"/>
</dbReference>
<dbReference type="GO" id="GO:0006310">
    <property type="term" value="P:DNA recombination"/>
    <property type="evidence" value="ECO:0007669"/>
    <property type="project" value="UniProtKB-UniRule"/>
</dbReference>
<dbReference type="GO" id="GO:0006281">
    <property type="term" value="P:DNA repair"/>
    <property type="evidence" value="ECO:0007669"/>
    <property type="project" value="UniProtKB-UniRule"/>
</dbReference>
<dbReference type="CDD" id="cd14332">
    <property type="entry name" value="UBA_RuvA_C"/>
    <property type="match status" value="1"/>
</dbReference>
<dbReference type="Gene3D" id="1.10.150.20">
    <property type="entry name" value="5' to 3' exonuclease, C-terminal subdomain"/>
    <property type="match status" value="1"/>
</dbReference>
<dbReference type="Gene3D" id="1.10.8.10">
    <property type="entry name" value="DNA helicase RuvA subunit, C-terminal domain"/>
    <property type="match status" value="1"/>
</dbReference>
<dbReference type="Gene3D" id="2.40.50.140">
    <property type="entry name" value="Nucleic acid-binding proteins"/>
    <property type="match status" value="1"/>
</dbReference>
<dbReference type="HAMAP" id="MF_00031">
    <property type="entry name" value="DNA_HJ_migration_RuvA"/>
    <property type="match status" value="1"/>
</dbReference>
<dbReference type="InterPro" id="IPR013849">
    <property type="entry name" value="DNA_helicase_Holl-junc_RuvA_I"/>
</dbReference>
<dbReference type="InterPro" id="IPR003583">
    <property type="entry name" value="Hlx-hairpin-Hlx_DNA-bd_motif"/>
</dbReference>
<dbReference type="InterPro" id="IPR012340">
    <property type="entry name" value="NA-bd_OB-fold"/>
</dbReference>
<dbReference type="InterPro" id="IPR000085">
    <property type="entry name" value="RuvA"/>
</dbReference>
<dbReference type="InterPro" id="IPR010994">
    <property type="entry name" value="RuvA_2-like"/>
</dbReference>
<dbReference type="InterPro" id="IPR011114">
    <property type="entry name" value="RuvA_C"/>
</dbReference>
<dbReference type="InterPro" id="IPR036267">
    <property type="entry name" value="RuvA_C_sf"/>
</dbReference>
<dbReference type="NCBIfam" id="TIGR00084">
    <property type="entry name" value="ruvA"/>
    <property type="match status" value="1"/>
</dbReference>
<dbReference type="Pfam" id="PF14520">
    <property type="entry name" value="HHH_5"/>
    <property type="match status" value="1"/>
</dbReference>
<dbReference type="Pfam" id="PF07499">
    <property type="entry name" value="RuvA_C"/>
    <property type="match status" value="1"/>
</dbReference>
<dbReference type="Pfam" id="PF01330">
    <property type="entry name" value="RuvA_N"/>
    <property type="match status" value="1"/>
</dbReference>
<dbReference type="SMART" id="SM00278">
    <property type="entry name" value="HhH1"/>
    <property type="match status" value="2"/>
</dbReference>
<dbReference type="SUPFAM" id="SSF46929">
    <property type="entry name" value="DNA helicase RuvA subunit, C-terminal domain"/>
    <property type="match status" value="1"/>
</dbReference>
<dbReference type="SUPFAM" id="SSF50249">
    <property type="entry name" value="Nucleic acid-binding proteins"/>
    <property type="match status" value="1"/>
</dbReference>
<dbReference type="SUPFAM" id="SSF47781">
    <property type="entry name" value="RuvA domain 2-like"/>
    <property type="match status" value="1"/>
</dbReference>
<reference key="1">
    <citation type="journal article" date="2003" name="J. Bacteriol.">
        <title>Complete genome sequence of the oral pathogenic bacterium Porphyromonas gingivalis strain W83.</title>
        <authorList>
            <person name="Nelson K.E."/>
            <person name="Fleischmann R.D."/>
            <person name="DeBoy R.T."/>
            <person name="Paulsen I.T."/>
            <person name="Fouts D.E."/>
            <person name="Eisen J.A."/>
            <person name="Daugherty S.C."/>
            <person name="Dodson R.J."/>
            <person name="Durkin A.S."/>
            <person name="Gwinn M.L."/>
            <person name="Haft D.H."/>
            <person name="Kolonay J.F."/>
            <person name="Nelson W.C."/>
            <person name="Mason T.M."/>
            <person name="Tallon L."/>
            <person name="Gray J."/>
            <person name="Granger D."/>
            <person name="Tettelin H."/>
            <person name="Dong H."/>
            <person name="Galvin J.L."/>
            <person name="Duncan M.J."/>
            <person name="Dewhirst F.E."/>
            <person name="Fraser C.M."/>
        </authorList>
    </citation>
    <scope>NUCLEOTIDE SEQUENCE [LARGE SCALE GENOMIC DNA]</scope>
    <source>
        <strain>ATCC BAA-308 / W83</strain>
    </source>
</reference>
<sequence>MIEYLKGAIVGLTPTNLVIECAGVGYDVNVSLTTYSAYQGKKEGLIWITQLIREDAHLLYGFSTKEERTLFGQLTSVSGVGPTTAQLILSSYAPQELAALITTGQADALKAVKGIGLKTAQRIIVDLKGKIQLETSSDEILSARTAVGDAALNTIASGEEAISALKMLGFADPAIRKAVKSILSEDSSLAVEDIIKRALRML</sequence>
<protein>
    <recommendedName>
        <fullName evidence="1">Holliday junction branch migration complex subunit RuvA</fullName>
    </recommendedName>
</protein>
<comment type="function">
    <text evidence="1">The RuvA-RuvB-RuvC complex processes Holliday junction (HJ) DNA during genetic recombination and DNA repair, while the RuvA-RuvB complex plays an important role in the rescue of blocked DNA replication forks via replication fork reversal (RFR). RuvA specifically binds to HJ cruciform DNA, conferring on it an open structure. The RuvB hexamer acts as an ATP-dependent pump, pulling dsDNA into and through the RuvAB complex. HJ branch migration allows RuvC to scan DNA until it finds its consensus sequence, where it cleaves and resolves the cruciform DNA.</text>
</comment>
<comment type="subunit">
    <text evidence="1">Homotetramer. Forms an RuvA(8)-RuvB(12)-Holliday junction (HJ) complex. HJ DNA is sandwiched between 2 RuvA tetramers; dsDNA enters through RuvA and exits via RuvB. An RuvB hexamer assembles on each DNA strand where it exits the tetramer. Each RuvB hexamer is contacted by two RuvA subunits (via domain III) on 2 adjacent RuvB subunits; this complex drives branch migration. In the full resolvosome a probable DNA-RuvA(4)-RuvB(12)-RuvC(2) complex forms which resolves the HJ.</text>
</comment>
<comment type="subcellular location">
    <subcellularLocation>
        <location evidence="1">Cytoplasm</location>
    </subcellularLocation>
</comment>
<comment type="domain">
    <text evidence="1">Has three domains with a flexible linker between the domains II and III and assumes an 'L' shape. Domain III is highly mobile and contacts RuvB.</text>
</comment>
<comment type="similarity">
    <text evidence="1">Belongs to the RuvA family.</text>
</comment>
<gene>
    <name evidence="1" type="primary">ruvA</name>
    <name type="ordered locus">PG_0811</name>
</gene>
<proteinExistence type="inferred from homology"/>
<evidence type="ECO:0000255" key="1">
    <source>
        <dbReference type="HAMAP-Rule" id="MF_00031"/>
    </source>
</evidence>